<proteinExistence type="evidence at protein level"/>
<organism>
    <name type="scientific">Bothrops jararaca</name>
    <name type="common">Jararaca</name>
    <name type="synonym">Bothrops jajaraca</name>
    <dbReference type="NCBI Taxonomy" id="8724"/>
    <lineage>
        <taxon>Eukaryota</taxon>
        <taxon>Metazoa</taxon>
        <taxon>Chordata</taxon>
        <taxon>Craniata</taxon>
        <taxon>Vertebrata</taxon>
        <taxon>Euteleostomi</taxon>
        <taxon>Lepidosauria</taxon>
        <taxon>Squamata</taxon>
        <taxon>Bifurcata</taxon>
        <taxon>Unidentata</taxon>
        <taxon>Episquamata</taxon>
        <taxon>Toxicofera</taxon>
        <taxon>Serpentes</taxon>
        <taxon>Colubroidea</taxon>
        <taxon>Viperidae</taxon>
        <taxon>Crotalinae</taxon>
        <taxon>Bothrops</taxon>
    </lineage>
</organism>
<accession>Q10581</accession>
<dbReference type="GO" id="GO:0042310">
    <property type="term" value="P:vasoconstriction"/>
    <property type="evidence" value="ECO:0007669"/>
    <property type="project" value="UniProtKB-KW"/>
</dbReference>
<feature type="peptide" id="PRO_0000045114" description="Angiotensin-like peptide 1">
    <location>
        <begin position="1"/>
        <end position="10" status="greater than"/>
    </location>
</feature>
<feature type="non-terminal residue">
    <location>
        <position position="10"/>
    </location>
</feature>
<sequence length="10" mass="1309">DRVYVHPFYL</sequence>
<comment type="similarity">
    <text evidence="1">Belongs to the serpin family.</text>
</comment>
<evidence type="ECO:0000305" key="1"/>
<reference key="1">
    <citation type="journal article" date="1996" name="Comp. Biochem. Physiol.">
        <title>Isolation and identification of angiotensin-like peptides from the plasma of the snake Bothrops jararaca.</title>
        <authorList>
            <person name="Borgheresi R.A.M.B."/>
            <person name="Dalle Lucca J."/>
            <person name="Carmona E."/>
            <person name="Picarelli Z.P."/>
        </authorList>
    </citation>
    <scope>PROTEIN SEQUENCE</scope>
    <source>
        <tissue>Plasma</tissue>
    </source>
</reference>
<keyword id="KW-0903">Direct protein sequencing</keyword>
<keyword id="KW-0838">Vasoactive</keyword>
<keyword id="KW-0839">Vasoconstrictor</keyword>
<protein>
    <recommendedName>
        <fullName>Angiotensin-like peptide 1</fullName>
    </recommendedName>
</protein>
<name>ANGT1_BOTJA</name>